<evidence type="ECO:0000250" key="1"/>
<evidence type="ECO:0000305" key="2"/>
<gene>
    <name type="primary">bioF</name>
    <name type="ordered locus">BC_4117</name>
</gene>
<feature type="chain" id="PRO_0000380914" description="Putative 8-amino-7-oxononanoate synthase">
    <location>
        <begin position="1"/>
        <end position="395"/>
    </location>
</feature>
<feature type="binding site" evidence="1">
    <location>
        <position position="23"/>
    </location>
    <ligand>
        <name>substrate</name>
    </ligand>
</feature>
<feature type="binding site" evidence="1">
    <location>
        <begin position="110"/>
        <end position="111"/>
    </location>
    <ligand>
        <name>pyridoxal 5'-phosphate</name>
        <dbReference type="ChEBI" id="CHEBI:597326"/>
    </ligand>
</feature>
<feature type="binding site" evidence="1">
    <location>
        <position position="135"/>
    </location>
    <ligand>
        <name>substrate</name>
    </ligand>
</feature>
<feature type="binding site" evidence="1">
    <location>
        <position position="182"/>
    </location>
    <ligand>
        <name>pyridoxal 5'-phosphate</name>
        <dbReference type="ChEBI" id="CHEBI:597326"/>
    </ligand>
</feature>
<feature type="binding site" evidence="1">
    <location>
        <begin position="207"/>
        <end position="210"/>
    </location>
    <ligand>
        <name>pyridoxal 5'-phosphate</name>
        <dbReference type="ChEBI" id="CHEBI:597326"/>
    </ligand>
</feature>
<feature type="binding site" evidence="1">
    <location>
        <begin position="239"/>
        <end position="242"/>
    </location>
    <ligand>
        <name>pyridoxal 5'-phosphate</name>
        <dbReference type="ChEBI" id="CHEBI:597326"/>
    </ligand>
</feature>
<feature type="binding site" evidence="1">
    <location>
        <position position="356"/>
    </location>
    <ligand>
        <name>substrate</name>
    </ligand>
</feature>
<feature type="modified residue" description="N6-(pyridoxal phosphate)lysine" evidence="1">
    <location>
        <position position="242"/>
    </location>
</feature>
<reference key="1">
    <citation type="journal article" date="2003" name="Nature">
        <title>Genome sequence of Bacillus cereus and comparative analysis with Bacillus anthracis.</title>
        <authorList>
            <person name="Ivanova N."/>
            <person name="Sorokin A."/>
            <person name="Anderson I."/>
            <person name="Galleron N."/>
            <person name="Candelon B."/>
            <person name="Kapatral V."/>
            <person name="Bhattacharyya A."/>
            <person name="Reznik G."/>
            <person name="Mikhailova N."/>
            <person name="Lapidus A."/>
            <person name="Chu L."/>
            <person name="Mazur M."/>
            <person name="Goltsman E."/>
            <person name="Larsen N."/>
            <person name="D'Souza M."/>
            <person name="Walunas T."/>
            <person name="Grechkin Y."/>
            <person name="Pusch G."/>
            <person name="Haselkorn R."/>
            <person name="Fonstein M."/>
            <person name="Ehrlich S.D."/>
            <person name="Overbeek R."/>
            <person name="Kyrpides N.C."/>
        </authorList>
    </citation>
    <scope>NUCLEOTIDE SEQUENCE [LARGE SCALE GENOMIC DNA]</scope>
    <source>
        <strain>ATCC 14579 / DSM 31 / CCUG 7414 / JCM 2152 / NBRC 15305 / NCIMB 9373 / NCTC 2599 / NRRL B-3711</strain>
    </source>
</reference>
<keyword id="KW-0093">Biotin biosynthesis</keyword>
<keyword id="KW-0663">Pyridoxal phosphate</keyword>
<keyword id="KW-1185">Reference proteome</keyword>
<keyword id="KW-0808">Transferase</keyword>
<organism>
    <name type="scientific">Bacillus cereus (strain ATCC 14579 / DSM 31 / CCUG 7414 / JCM 2152 / NBRC 15305 / NCIMB 9373 / NCTC 2599 / NRRL B-3711)</name>
    <dbReference type="NCBI Taxonomy" id="226900"/>
    <lineage>
        <taxon>Bacteria</taxon>
        <taxon>Bacillati</taxon>
        <taxon>Bacillota</taxon>
        <taxon>Bacilli</taxon>
        <taxon>Bacillales</taxon>
        <taxon>Bacillaceae</taxon>
        <taxon>Bacillus</taxon>
        <taxon>Bacillus cereus group</taxon>
    </lineage>
</organism>
<dbReference type="EC" id="2.3.1.47"/>
<dbReference type="EMBL" id="AE016877">
    <property type="protein sequence ID" value="AAP11036.1"/>
    <property type="molecule type" value="Genomic_DNA"/>
</dbReference>
<dbReference type="RefSeq" id="NP_833835.1">
    <property type="nucleotide sequence ID" value="NC_004722.1"/>
</dbReference>
<dbReference type="RefSeq" id="WP_001077285.1">
    <property type="nucleotide sequence ID" value="NC_004722.1"/>
</dbReference>
<dbReference type="SMR" id="Q818X0"/>
<dbReference type="STRING" id="226900.BC_4117"/>
<dbReference type="KEGG" id="bce:BC4117"/>
<dbReference type="PATRIC" id="fig|226900.8.peg.4253"/>
<dbReference type="HOGENOM" id="CLU_015846_11_2_9"/>
<dbReference type="OrthoDB" id="9807157at2"/>
<dbReference type="UniPathway" id="UPA00078"/>
<dbReference type="Proteomes" id="UP000001417">
    <property type="component" value="Chromosome"/>
</dbReference>
<dbReference type="GO" id="GO:0008710">
    <property type="term" value="F:8-amino-7-oxononanoate synthase activity"/>
    <property type="evidence" value="ECO:0000318"/>
    <property type="project" value="GO_Central"/>
</dbReference>
<dbReference type="GO" id="GO:0030170">
    <property type="term" value="F:pyridoxal phosphate binding"/>
    <property type="evidence" value="ECO:0007669"/>
    <property type="project" value="InterPro"/>
</dbReference>
<dbReference type="GO" id="GO:0009102">
    <property type="term" value="P:biotin biosynthetic process"/>
    <property type="evidence" value="ECO:0000318"/>
    <property type="project" value="GO_Central"/>
</dbReference>
<dbReference type="CDD" id="cd06454">
    <property type="entry name" value="KBL_like"/>
    <property type="match status" value="1"/>
</dbReference>
<dbReference type="FunFam" id="3.40.640.10:FF:000006">
    <property type="entry name" value="5-aminolevulinate synthase, mitochondrial"/>
    <property type="match status" value="1"/>
</dbReference>
<dbReference type="Gene3D" id="3.90.1150.10">
    <property type="entry name" value="Aspartate Aminotransferase, domain 1"/>
    <property type="match status" value="1"/>
</dbReference>
<dbReference type="Gene3D" id="3.40.640.10">
    <property type="entry name" value="Type I PLP-dependent aspartate aminotransferase-like (Major domain)"/>
    <property type="match status" value="1"/>
</dbReference>
<dbReference type="InterPro" id="IPR001917">
    <property type="entry name" value="Aminotrans_II_pyridoxalP_BS"/>
</dbReference>
<dbReference type="InterPro" id="IPR004839">
    <property type="entry name" value="Aminotransferase_I/II_large"/>
</dbReference>
<dbReference type="InterPro" id="IPR050087">
    <property type="entry name" value="AON_synthase_class-II"/>
</dbReference>
<dbReference type="InterPro" id="IPR004723">
    <property type="entry name" value="AONS_Archaea/Proteobacteria"/>
</dbReference>
<dbReference type="InterPro" id="IPR015424">
    <property type="entry name" value="PyrdxlP-dep_Trfase"/>
</dbReference>
<dbReference type="InterPro" id="IPR015421">
    <property type="entry name" value="PyrdxlP-dep_Trfase_major"/>
</dbReference>
<dbReference type="InterPro" id="IPR015422">
    <property type="entry name" value="PyrdxlP-dep_Trfase_small"/>
</dbReference>
<dbReference type="NCBIfam" id="TIGR00858">
    <property type="entry name" value="bioF"/>
    <property type="match status" value="1"/>
</dbReference>
<dbReference type="PANTHER" id="PTHR13693:SF100">
    <property type="entry name" value="8-AMINO-7-OXONONANOATE SYNTHASE"/>
    <property type="match status" value="1"/>
</dbReference>
<dbReference type="PANTHER" id="PTHR13693">
    <property type="entry name" value="CLASS II AMINOTRANSFERASE/8-AMINO-7-OXONONANOATE SYNTHASE"/>
    <property type="match status" value="1"/>
</dbReference>
<dbReference type="Pfam" id="PF00155">
    <property type="entry name" value="Aminotran_1_2"/>
    <property type="match status" value="1"/>
</dbReference>
<dbReference type="SUPFAM" id="SSF53383">
    <property type="entry name" value="PLP-dependent transferases"/>
    <property type="match status" value="1"/>
</dbReference>
<dbReference type="PROSITE" id="PS00599">
    <property type="entry name" value="AA_TRANSFER_CLASS_2"/>
    <property type="match status" value="1"/>
</dbReference>
<accession>Q818X0</accession>
<protein>
    <recommendedName>
        <fullName>Putative 8-amino-7-oxononanoate synthase</fullName>
        <shortName>AONS</shortName>
        <ecNumber>2.3.1.47</ecNumber>
    </recommendedName>
    <alternativeName>
        <fullName>7-keto-8-amino-pelargonic acid synthase</fullName>
        <shortName>7-KAP synthase</shortName>
    </alternativeName>
    <alternativeName>
        <fullName>8-amino-7-ketopelargonate synthase</fullName>
    </alternativeName>
</protein>
<sequence>MNQTWRAHLQCKLQQLHEQGQYRDLHVTEKAEETWLIRDKKRMLNLASNNYLGLAGDERLKEAAIACTKRYGTGATASRLVVGNHLLYEEVERSICDWKGTERALIVNSGYTANIGAISSLASRHDIVFSDKLNHASIVDGIILSGAEHKRYRHNDLDHLEKLLKMASPEKRKLIVTDTVFSMDGDTAYLRDLVQLKEKYGAIIIVDEAHASGIYGIGGAGLSHIEKNLSQKIDIHMGTFSKALGCYGAYLTGDEIYIEYLQNMMRSFIFTTALPPSTLGAVQKAIEIVKEDNERRENLIANGEYFRTKLRDAGFDIGNSSTHIVPIVVGSNEHALRFSKRLQEAGIAAIAIRPPTVPVHSSRIRFAVTSQHTIADLKWAIDRIIHIAKEEELFV</sequence>
<name>BIOF_BACCR</name>
<proteinExistence type="inferred from homology"/>
<comment type="function">
    <text evidence="1">Catalyzes the decarboxylative condensation of pimeloyl-[acyl-carrier protein] and L-alanine to produce 8-amino-7-oxononanoate (AON), [acyl-carrier protein], and carbon dioxide.</text>
</comment>
<comment type="catalytic activity">
    <reaction>
        <text>6-carboxyhexanoyl-[ACP] + L-alanine + H(+) = (8S)-8-amino-7-oxononanoate + holo-[ACP] + CO2</text>
        <dbReference type="Rhea" id="RHEA:42288"/>
        <dbReference type="Rhea" id="RHEA-COMP:9685"/>
        <dbReference type="Rhea" id="RHEA-COMP:9955"/>
        <dbReference type="ChEBI" id="CHEBI:15378"/>
        <dbReference type="ChEBI" id="CHEBI:16526"/>
        <dbReference type="ChEBI" id="CHEBI:57972"/>
        <dbReference type="ChEBI" id="CHEBI:64479"/>
        <dbReference type="ChEBI" id="CHEBI:78846"/>
        <dbReference type="ChEBI" id="CHEBI:149468"/>
        <dbReference type="EC" id="2.3.1.47"/>
    </reaction>
</comment>
<comment type="cofactor">
    <cofactor evidence="1">
        <name>pyridoxal 5'-phosphate</name>
        <dbReference type="ChEBI" id="CHEBI:597326"/>
    </cofactor>
</comment>
<comment type="pathway">
    <text>Cofactor biosynthesis; biotin biosynthesis.</text>
</comment>
<comment type="subunit">
    <text evidence="1">Homodimer.</text>
</comment>
<comment type="similarity">
    <text evidence="2">Belongs to the class-II pyridoxal-phosphate-dependent aminotransferase family. BioF subfamily.</text>
</comment>